<feature type="transit peptide" description="Chloroplast" evidence="2">
    <location>
        <begin position="1"/>
        <end position="36"/>
    </location>
</feature>
<feature type="chain" id="PRO_0000398858" description="Lipoyl synthase, chloroplastic">
    <location>
        <begin position="37"/>
        <end position="394"/>
    </location>
</feature>
<feature type="domain" description="Radical SAM core" evidence="3">
    <location>
        <begin position="141"/>
        <end position="362"/>
    </location>
</feature>
<feature type="binding site" evidence="1 2">
    <location>
        <position position="127"/>
    </location>
    <ligand>
        <name>[4Fe-4S] cluster</name>
        <dbReference type="ChEBI" id="CHEBI:49883"/>
        <label>1</label>
    </ligand>
</feature>
<feature type="binding site" evidence="1 2">
    <location>
        <position position="132"/>
    </location>
    <ligand>
        <name>[4Fe-4S] cluster</name>
        <dbReference type="ChEBI" id="CHEBI:49883"/>
        <label>1</label>
    </ligand>
</feature>
<feature type="binding site" evidence="1 2">
    <location>
        <position position="138"/>
    </location>
    <ligand>
        <name>[4Fe-4S] cluster</name>
        <dbReference type="ChEBI" id="CHEBI:49883"/>
        <label>1</label>
    </ligand>
</feature>
<feature type="binding site" evidence="1 2">
    <location>
        <position position="158"/>
    </location>
    <ligand>
        <name>[4Fe-4S] cluster</name>
        <dbReference type="ChEBI" id="CHEBI:49883"/>
        <label>2</label>
        <note>4Fe-4S-S-AdoMet</note>
    </ligand>
</feature>
<feature type="binding site" evidence="1 2">
    <location>
        <position position="162"/>
    </location>
    <ligand>
        <name>[4Fe-4S] cluster</name>
        <dbReference type="ChEBI" id="CHEBI:49883"/>
        <label>2</label>
        <note>4Fe-4S-S-AdoMet</note>
    </ligand>
</feature>
<feature type="binding site" evidence="1 2">
    <location>
        <position position="165"/>
    </location>
    <ligand>
        <name>[4Fe-4S] cluster</name>
        <dbReference type="ChEBI" id="CHEBI:49883"/>
        <label>2</label>
        <note>4Fe-4S-S-AdoMet</note>
    </ligand>
</feature>
<feature type="binding site" evidence="1 2">
    <location>
        <position position="373"/>
    </location>
    <ligand>
        <name>[4Fe-4S] cluster</name>
        <dbReference type="ChEBI" id="CHEBI:49883"/>
        <label>1</label>
    </ligand>
</feature>
<gene>
    <name evidence="2" type="primary">LIP1P</name>
    <name evidence="7" type="ordered locus">At5g08415</name>
    <name evidence="8" type="ORF">F8L15.140</name>
</gene>
<name>LISC_ARATH</name>
<organism>
    <name type="scientific">Arabidopsis thaliana</name>
    <name type="common">Mouse-ear cress</name>
    <dbReference type="NCBI Taxonomy" id="3702"/>
    <lineage>
        <taxon>Eukaryota</taxon>
        <taxon>Viridiplantae</taxon>
        <taxon>Streptophyta</taxon>
        <taxon>Embryophyta</taxon>
        <taxon>Tracheophyta</taxon>
        <taxon>Spermatophyta</taxon>
        <taxon>Magnoliopsida</taxon>
        <taxon>eudicotyledons</taxon>
        <taxon>Gunneridae</taxon>
        <taxon>Pentapetalae</taxon>
        <taxon>rosids</taxon>
        <taxon>malvids</taxon>
        <taxon>Brassicales</taxon>
        <taxon>Brassicaceae</taxon>
        <taxon>Camelineae</taxon>
        <taxon>Arabidopsis</taxon>
    </lineage>
</organism>
<comment type="function">
    <text evidence="2 4 5">Catalyzes the radical-mediated insertion of two sulfur atoms into the C-6 and C-8 positions of the octanoyl moiety bound to the lipoyl domains of lipoate-dependent enzymes, thereby converting the octanoylated domains into lipoylated derivatives (By similarity) (PubMed:12062419). Together with LIP2P and LIP2P2 is essential for de novo plastidial protein lipoylation during seed development (PubMed:23581459).</text>
</comment>
<comment type="catalytic activity">
    <reaction evidence="2 4">
        <text>[[Fe-S] cluster scaffold protein carrying a second [4Fe-4S](2+) cluster] + N(6)-octanoyl-L-lysyl-[protein] + 2 oxidized [2Fe-2S]-[ferredoxin] + 2 S-adenosyl-L-methionine + 4 H(+) = [[Fe-S] cluster scaffold protein] + N(6)-[(R)-dihydrolipoyl]-L-lysyl-[protein] + 4 Fe(3+) + 2 hydrogen sulfide + 2 5'-deoxyadenosine + 2 L-methionine + 2 reduced [2Fe-2S]-[ferredoxin]</text>
        <dbReference type="Rhea" id="RHEA:16585"/>
        <dbReference type="Rhea" id="RHEA-COMP:9928"/>
        <dbReference type="Rhea" id="RHEA-COMP:10000"/>
        <dbReference type="Rhea" id="RHEA-COMP:10001"/>
        <dbReference type="Rhea" id="RHEA-COMP:10475"/>
        <dbReference type="Rhea" id="RHEA-COMP:14568"/>
        <dbReference type="Rhea" id="RHEA-COMP:14569"/>
        <dbReference type="ChEBI" id="CHEBI:15378"/>
        <dbReference type="ChEBI" id="CHEBI:17319"/>
        <dbReference type="ChEBI" id="CHEBI:29034"/>
        <dbReference type="ChEBI" id="CHEBI:29919"/>
        <dbReference type="ChEBI" id="CHEBI:33722"/>
        <dbReference type="ChEBI" id="CHEBI:33737"/>
        <dbReference type="ChEBI" id="CHEBI:33738"/>
        <dbReference type="ChEBI" id="CHEBI:57844"/>
        <dbReference type="ChEBI" id="CHEBI:59789"/>
        <dbReference type="ChEBI" id="CHEBI:78809"/>
        <dbReference type="ChEBI" id="CHEBI:83100"/>
        <dbReference type="EC" id="2.8.1.8"/>
    </reaction>
</comment>
<comment type="cofactor">
    <cofactor evidence="2">
        <name>[4Fe-4S] cluster</name>
        <dbReference type="ChEBI" id="CHEBI:49883"/>
    </cofactor>
    <text evidence="2">Binds 2 [4Fe-4S] clusters per subunit. One cluster is coordinated with 3 cysteines and an exchangeable S-adenosyl-L-methionine.</text>
</comment>
<comment type="pathway">
    <text evidence="2">Protein modification; protein lipoylation via endogenous pathway; protein N(6)-(lipoyl)lysine from octanoyl-[acyl-carrier-protein]: step 2/2.</text>
</comment>
<comment type="subcellular location">
    <subcellularLocation>
        <location evidence="2 4">Plastid</location>
        <location evidence="2 4">Chloroplast</location>
    </subcellularLocation>
</comment>
<comment type="tissue specificity">
    <text evidence="4">Expressed in roots, leaves and flowers.</text>
</comment>
<comment type="disruption phenotype">
    <text evidence="5">Embryonic lethality.</text>
</comment>
<comment type="similarity">
    <text evidence="2">Belongs to the radical SAM superfamily. Lipoyl synthase family.</text>
</comment>
<comment type="sequence caution" evidence="6">
    <conflict type="erroneous initiation">
        <sequence resource="EMBL-CDS" id="AAM62684"/>
    </conflict>
    <text>Truncated N-terminus.</text>
</comment>
<comment type="sequence caution" evidence="6">
    <conflict type="erroneous gene model prediction">
        <sequence resource="EMBL-CDS" id="CAC08341"/>
    </conflict>
</comment>
<protein>
    <recommendedName>
        <fullName evidence="2">Lipoyl synthase, chloroplastic</fullName>
        <ecNumber evidence="2 4">2.8.1.8</ecNumber>
    </recommendedName>
    <alternativeName>
        <fullName evidence="2">Lipoate synthase</fullName>
        <shortName evidence="2">LS</shortName>
        <shortName evidence="2">Lip-syn</shortName>
    </alternativeName>
    <alternativeName>
        <fullName evidence="2">Lipoate synthase, plastidial</fullName>
        <shortName evidence="2">LIP1p</shortName>
    </alternativeName>
    <alternativeName>
        <fullName evidence="2">Lipoic acid synthase</fullName>
    </alternativeName>
</protein>
<proteinExistence type="evidence at protein level"/>
<dbReference type="EC" id="2.8.1.8" evidence="2 4"/>
<dbReference type="EMBL" id="AB073745">
    <property type="protein sequence ID" value="BAB91180.1"/>
    <property type="molecule type" value="mRNA"/>
</dbReference>
<dbReference type="EMBL" id="AL392174">
    <property type="protein sequence ID" value="CAC08341.1"/>
    <property type="status" value="ALT_SEQ"/>
    <property type="molecule type" value="Genomic_DNA"/>
</dbReference>
<dbReference type="EMBL" id="CP002688">
    <property type="protein sequence ID" value="AED91298.1"/>
    <property type="molecule type" value="Genomic_DNA"/>
</dbReference>
<dbReference type="EMBL" id="AY085458">
    <property type="protein sequence ID" value="AAM62684.1"/>
    <property type="status" value="ALT_INIT"/>
    <property type="molecule type" value="mRNA"/>
</dbReference>
<dbReference type="EMBL" id="BT025549">
    <property type="protein sequence ID" value="ABF58967.1"/>
    <property type="molecule type" value="mRNA"/>
</dbReference>
<dbReference type="RefSeq" id="NP_568196.1">
    <property type="nucleotide sequence ID" value="NM_120926.3"/>
</dbReference>
<dbReference type="SMR" id="Q8LEE8"/>
<dbReference type="FunCoup" id="Q8LEE8">
    <property type="interactions" value="2803"/>
</dbReference>
<dbReference type="STRING" id="3702.Q8LEE8"/>
<dbReference type="PaxDb" id="3702-AT5G08415.1"/>
<dbReference type="ProteomicsDB" id="238385"/>
<dbReference type="EnsemblPlants" id="AT5G08415.1">
    <property type="protein sequence ID" value="AT5G08415.1"/>
    <property type="gene ID" value="AT5G08415"/>
</dbReference>
<dbReference type="GeneID" id="830740"/>
<dbReference type="Gramene" id="AT5G08415.1">
    <property type="protein sequence ID" value="AT5G08415.1"/>
    <property type="gene ID" value="AT5G08415"/>
</dbReference>
<dbReference type="KEGG" id="ath:AT5G08415"/>
<dbReference type="Araport" id="AT5G08415"/>
<dbReference type="TAIR" id="AT5G08415">
    <property type="gene designation" value="LIP1"/>
</dbReference>
<dbReference type="eggNOG" id="KOG2672">
    <property type="taxonomic scope" value="Eukaryota"/>
</dbReference>
<dbReference type="HOGENOM" id="CLU_033144_2_0_1"/>
<dbReference type="InParanoid" id="Q8LEE8"/>
<dbReference type="OMA" id="RSCAFCQ"/>
<dbReference type="OrthoDB" id="3231at2759"/>
<dbReference type="PhylomeDB" id="Q8LEE8"/>
<dbReference type="UniPathway" id="UPA00538">
    <property type="reaction ID" value="UER00593"/>
</dbReference>
<dbReference type="PRO" id="PR:Q8LEE8"/>
<dbReference type="Proteomes" id="UP000006548">
    <property type="component" value="Chromosome 5"/>
</dbReference>
<dbReference type="ExpressionAtlas" id="Q8LEE8">
    <property type="expression patterns" value="baseline and differential"/>
</dbReference>
<dbReference type="GO" id="GO:0009507">
    <property type="term" value="C:chloroplast"/>
    <property type="evidence" value="ECO:0007669"/>
    <property type="project" value="UniProtKB-SubCell"/>
</dbReference>
<dbReference type="GO" id="GO:0051539">
    <property type="term" value="F:4 iron, 4 sulfur cluster binding"/>
    <property type="evidence" value="ECO:0007669"/>
    <property type="project" value="UniProtKB-UniRule"/>
</dbReference>
<dbReference type="GO" id="GO:0016992">
    <property type="term" value="F:lipoate synthase activity"/>
    <property type="evidence" value="ECO:0007669"/>
    <property type="project" value="UniProtKB-UniRule"/>
</dbReference>
<dbReference type="GO" id="GO:0046872">
    <property type="term" value="F:metal ion binding"/>
    <property type="evidence" value="ECO:0007669"/>
    <property type="project" value="UniProtKB-KW"/>
</dbReference>
<dbReference type="CDD" id="cd01335">
    <property type="entry name" value="Radical_SAM"/>
    <property type="match status" value="1"/>
</dbReference>
<dbReference type="FunFam" id="3.20.20.70:FF:000036">
    <property type="entry name" value="Lipoyl synthase, mitochondrial"/>
    <property type="match status" value="1"/>
</dbReference>
<dbReference type="Gene3D" id="3.20.20.70">
    <property type="entry name" value="Aldolase class I"/>
    <property type="match status" value="1"/>
</dbReference>
<dbReference type="HAMAP" id="MF_00206">
    <property type="entry name" value="Lipoyl_synth"/>
    <property type="match status" value="1"/>
</dbReference>
<dbReference type="HAMAP" id="MF_03129">
    <property type="entry name" value="Lipoyl_synth_plantC"/>
    <property type="match status" value="1"/>
</dbReference>
<dbReference type="InterPro" id="IPR013785">
    <property type="entry name" value="Aldolase_TIM"/>
</dbReference>
<dbReference type="InterPro" id="IPR006638">
    <property type="entry name" value="Elp3/MiaA/NifB-like_rSAM"/>
</dbReference>
<dbReference type="InterPro" id="IPR031691">
    <property type="entry name" value="LIAS_N"/>
</dbReference>
<dbReference type="InterPro" id="IPR003698">
    <property type="entry name" value="Lipoyl_synth"/>
</dbReference>
<dbReference type="InterPro" id="IPR027526">
    <property type="entry name" value="Lipoyl_synth_chlpt"/>
</dbReference>
<dbReference type="InterPro" id="IPR007197">
    <property type="entry name" value="rSAM"/>
</dbReference>
<dbReference type="NCBIfam" id="TIGR00510">
    <property type="entry name" value="lipA"/>
    <property type="match status" value="1"/>
</dbReference>
<dbReference type="NCBIfam" id="NF004019">
    <property type="entry name" value="PRK05481.1"/>
    <property type="match status" value="1"/>
</dbReference>
<dbReference type="NCBIfam" id="NF009544">
    <property type="entry name" value="PRK12928.1"/>
    <property type="match status" value="1"/>
</dbReference>
<dbReference type="PANTHER" id="PTHR10949">
    <property type="entry name" value="LIPOYL SYNTHASE"/>
    <property type="match status" value="1"/>
</dbReference>
<dbReference type="PANTHER" id="PTHR10949:SF38">
    <property type="entry name" value="LIPOYL SYNTHASE, CHLOROPLASTIC"/>
    <property type="match status" value="1"/>
</dbReference>
<dbReference type="Pfam" id="PF16881">
    <property type="entry name" value="LIAS_N"/>
    <property type="match status" value="1"/>
</dbReference>
<dbReference type="Pfam" id="PF04055">
    <property type="entry name" value="Radical_SAM"/>
    <property type="match status" value="1"/>
</dbReference>
<dbReference type="SFLD" id="SFLDF00271">
    <property type="entry name" value="lipoyl_synthase"/>
    <property type="match status" value="1"/>
</dbReference>
<dbReference type="SFLD" id="SFLDS00029">
    <property type="entry name" value="Radical_SAM"/>
    <property type="match status" value="1"/>
</dbReference>
<dbReference type="SMART" id="SM00729">
    <property type="entry name" value="Elp3"/>
    <property type="match status" value="1"/>
</dbReference>
<dbReference type="SUPFAM" id="SSF102114">
    <property type="entry name" value="Radical SAM enzymes"/>
    <property type="match status" value="1"/>
</dbReference>
<dbReference type="PROSITE" id="PS51918">
    <property type="entry name" value="RADICAL_SAM"/>
    <property type="match status" value="1"/>
</dbReference>
<evidence type="ECO:0000250" key="1">
    <source>
        <dbReference type="UniProtKB" id="P9WK91"/>
    </source>
</evidence>
<evidence type="ECO:0000255" key="2">
    <source>
        <dbReference type="HAMAP-Rule" id="MF_03129"/>
    </source>
</evidence>
<evidence type="ECO:0000255" key="3">
    <source>
        <dbReference type="PROSITE-ProRule" id="PRU01266"/>
    </source>
</evidence>
<evidence type="ECO:0000269" key="4">
    <source>
    </source>
</evidence>
<evidence type="ECO:0000269" key="5">
    <source>
    </source>
</evidence>
<evidence type="ECO:0000305" key="6"/>
<evidence type="ECO:0000312" key="7">
    <source>
        <dbReference type="Araport" id="AT5G08415"/>
    </source>
</evidence>
<evidence type="ECO:0000312" key="8">
    <source>
        <dbReference type="EMBL" id="CAC08341.1"/>
    </source>
</evidence>
<accession>Q8LEE8</accession>
<accession>Q8LSZ8</accession>
<accession>Q9FT94</accession>
<reference key="1">
    <citation type="journal article" date="2002" name="FEBS Lett.">
        <title>The biosynthetic pathway for lipoic acid is present in plastids and mitochondria in Arabidopsis thaliana.</title>
        <authorList>
            <person name="Yasuno R."/>
            <person name="Wada H."/>
        </authorList>
    </citation>
    <scope>NUCLEOTIDE SEQUENCE [MRNA]</scope>
    <scope>FUNCTION</scope>
    <scope>CATALYTIC ACTIVITY</scope>
    <scope>TISSUE SPECIFICITY</scope>
    <scope>SUBCELLULAR LOCATION</scope>
</reference>
<reference key="2">
    <citation type="journal article" date="2000" name="Nature">
        <title>Sequence and analysis of chromosome 5 of the plant Arabidopsis thaliana.</title>
        <authorList>
            <person name="Tabata S."/>
            <person name="Kaneko T."/>
            <person name="Nakamura Y."/>
            <person name="Kotani H."/>
            <person name="Kato T."/>
            <person name="Asamizu E."/>
            <person name="Miyajima N."/>
            <person name="Sasamoto S."/>
            <person name="Kimura T."/>
            <person name="Hosouchi T."/>
            <person name="Kawashima K."/>
            <person name="Kohara M."/>
            <person name="Matsumoto M."/>
            <person name="Matsuno A."/>
            <person name="Muraki A."/>
            <person name="Nakayama S."/>
            <person name="Nakazaki N."/>
            <person name="Naruo K."/>
            <person name="Okumura S."/>
            <person name="Shinpo S."/>
            <person name="Takeuchi C."/>
            <person name="Wada T."/>
            <person name="Watanabe A."/>
            <person name="Yamada M."/>
            <person name="Yasuda M."/>
            <person name="Sato S."/>
            <person name="de la Bastide M."/>
            <person name="Huang E."/>
            <person name="Spiegel L."/>
            <person name="Gnoj L."/>
            <person name="O'Shaughnessy A."/>
            <person name="Preston R."/>
            <person name="Habermann K."/>
            <person name="Murray J."/>
            <person name="Johnson D."/>
            <person name="Rohlfing T."/>
            <person name="Nelson J."/>
            <person name="Stoneking T."/>
            <person name="Pepin K."/>
            <person name="Spieth J."/>
            <person name="Sekhon M."/>
            <person name="Armstrong J."/>
            <person name="Becker M."/>
            <person name="Belter E."/>
            <person name="Cordum H."/>
            <person name="Cordes M."/>
            <person name="Courtney L."/>
            <person name="Courtney W."/>
            <person name="Dante M."/>
            <person name="Du H."/>
            <person name="Edwards J."/>
            <person name="Fryman J."/>
            <person name="Haakensen B."/>
            <person name="Lamar E."/>
            <person name="Latreille P."/>
            <person name="Leonard S."/>
            <person name="Meyer R."/>
            <person name="Mulvaney E."/>
            <person name="Ozersky P."/>
            <person name="Riley A."/>
            <person name="Strowmatt C."/>
            <person name="Wagner-McPherson C."/>
            <person name="Wollam A."/>
            <person name="Yoakum M."/>
            <person name="Bell M."/>
            <person name="Dedhia N."/>
            <person name="Parnell L."/>
            <person name="Shah R."/>
            <person name="Rodriguez M."/>
            <person name="Hoon See L."/>
            <person name="Vil D."/>
            <person name="Baker J."/>
            <person name="Kirchoff K."/>
            <person name="Toth K."/>
            <person name="King L."/>
            <person name="Bahret A."/>
            <person name="Miller B."/>
            <person name="Marra M.A."/>
            <person name="Martienssen R."/>
            <person name="McCombie W.R."/>
            <person name="Wilson R.K."/>
            <person name="Murphy G."/>
            <person name="Bancroft I."/>
            <person name="Volckaert G."/>
            <person name="Wambutt R."/>
            <person name="Duesterhoeft A."/>
            <person name="Stiekema W."/>
            <person name="Pohl T."/>
            <person name="Entian K.-D."/>
            <person name="Terryn N."/>
            <person name="Hartley N."/>
            <person name="Bent E."/>
            <person name="Johnson S."/>
            <person name="Langham S.-A."/>
            <person name="McCullagh B."/>
            <person name="Robben J."/>
            <person name="Grymonprez B."/>
            <person name="Zimmermann W."/>
            <person name="Ramsperger U."/>
            <person name="Wedler H."/>
            <person name="Balke K."/>
            <person name="Wedler E."/>
            <person name="Peters S."/>
            <person name="van Staveren M."/>
            <person name="Dirkse W."/>
            <person name="Mooijman P."/>
            <person name="Klein Lankhorst R."/>
            <person name="Weitzenegger T."/>
            <person name="Bothe G."/>
            <person name="Rose M."/>
            <person name="Hauf J."/>
            <person name="Berneiser S."/>
            <person name="Hempel S."/>
            <person name="Feldpausch M."/>
            <person name="Lamberth S."/>
            <person name="Villarroel R."/>
            <person name="Gielen J."/>
            <person name="Ardiles W."/>
            <person name="Bents O."/>
            <person name="Lemcke K."/>
            <person name="Kolesov G."/>
            <person name="Mayer K.F.X."/>
            <person name="Rudd S."/>
            <person name="Schoof H."/>
            <person name="Schueller C."/>
            <person name="Zaccaria P."/>
            <person name="Mewes H.-W."/>
            <person name="Bevan M."/>
            <person name="Fransz P.F."/>
        </authorList>
    </citation>
    <scope>NUCLEOTIDE SEQUENCE [LARGE SCALE GENOMIC DNA]</scope>
    <source>
        <strain>cv. Columbia</strain>
    </source>
</reference>
<reference key="3">
    <citation type="journal article" date="2017" name="Plant J.">
        <title>Araport11: a complete reannotation of the Arabidopsis thaliana reference genome.</title>
        <authorList>
            <person name="Cheng C.Y."/>
            <person name="Krishnakumar V."/>
            <person name="Chan A.P."/>
            <person name="Thibaud-Nissen F."/>
            <person name="Schobel S."/>
            <person name="Town C.D."/>
        </authorList>
    </citation>
    <scope>GENOME REANNOTATION</scope>
    <source>
        <strain>cv. Columbia</strain>
    </source>
</reference>
<reference key="4">
    <citation type="submission" date="2002-03" db="EMBL/GenBank/DDBJ databases">
        <title>Full-length cDNA from Arabidopsis thaliana.</title>
        <authorList>
            <person name="Brover V.V."/>
            <person name="Troukhan M.E."/>
            <person name="Alexandrov N.A."/>
            <person name="Lu Y.-P."/>
            <person name="Flavell R.B."/>
            <person name="Feldmann K.A."/>
        </authorList>
    </citation>
    <scope>NUCLEOTIDE SEQUENCE [LARGE SCALE MRNA]</scope>
</reference>
<reference key="5">
    <citation type="submission" date="2006-05" db="EMBL/GenBank/DDBJ databases">
        <title>Arabidopsis ORF clones.</title>
        <authorList>
            <person name="Shinn P."/>
            <person name="Chen H."/>
            <person name="Kim C.J."/>
            <person name="Quinitio C."/>
            <person name="Ecker J.R."/>
        </authorList>
    </citation>
    <scope>NUCLEOTIDE SEQUENCE [LARGE SCALE MRNA]</scope>
</reference>
<reference key="6">
    <citation type="journal article" date="2014" name="Plant Biol.">
        <title>Two redundant octanoyltransferases and one obligatory lipoyl synthase provide protein-lipoylation autonomy to plastids of Arabidopsis.</title>
        <authorList>
            <person name="Ewald R."/>
            <person name="Hoffmann C."/>
            <person name="Neuhaus E."/>
            <person name="Bauwe H."/>
        </authorList>
    </citation>
    <scope>FUNCTION</scope>
    <scope>DISRUPTION PHENOTYPE</scope>
</reference>
<keyword id="KW-0004">4Fe-4S</keyword>
<keyword id="KW-0150">Chloroplast</keyword>
<keyword id="KW-0408">Iron</keyword>
<keyword id="KW-0411">Iron-sulfur</keyword>
<keyword id="KW-0479">Metal-binding</keyword>
<keyword id="KW-0934">Plastid</keyword>
<keyword id="KW-1185">Reference proteome</keyword>
<keyword id="KW-0949">S-adenosyl-L-methionine</keyword>
<keyword id="KW-0808">Transferase</keyword>
<keyword id="KW-0809">Transit peptide</keyword>
<sequence length="394" mass="43622">MMHHCSITKPTFSISISTQKLHHHSSKFLNLGFRIRCESGDVSSPLRTKAVSLSSEMEDSSSLKKSLMELEGKKSEPYPGGMPKMGPFTGRDPNVKKPAWLRQKAPQGERFQEVKESLSRLNLNTVCEEAQCPNIGECWNGGGDGVATATIMVLGDTCTRGCRFCAVKTSRNPPPPDPMEPENTAKAIASWGVDYIVITSVDRDDIPDGGSGHFAQTVKAMKRHKPDIMIECLTSDFRGDLEAVDTLVHSGLDVFAHNVETVKRLQRLVRDPRAGYEQSMSVLKHAKISKPGMITKTSIMLGLGETDEELKEAMADLRAIDVDILTLGQYLQPTPLHLTVKEYVTPEKFDFWKTYGESIGFRYVASGPLVRSSYRAGELFVKTMVKESYSKSLS</sequence>